<comment type="function">
    <text evidence="1">Catalyzes the oxidative deamination and cyclization of 2-amino-3,7-dideoxy-D-threo-hept-6-ulosonic acid (ADH) to yield 3-dehydroquinate (DHQ), which is fed into the canonical shikimic pathway of aromatic amino acid biosynthesis.</text>
</comment>
<comment type="catalytic activity">
    <reaction evidence="1">
        <text>2-amino-2,3,7-trideoxy-D-lyxo-hept-6-ulosonate + NAD(+) + H2O = 3-dehydroquinate + NH4(+) + NADH + H(+)</text>
        <dbReference type="Rhea" id="RHEA:25956"/>
        <dbReference type="ChEBI" id="CHEBI:15377"/>
        <dbReference type="ChEBI" id="CHEBI:15378"/>
        <dbReference type="ChEBI" id="CHEBI:28938"/>
        <dbReference type="ChEBI" id="CHEBI:32364"/>
        <dbReference type="ChEBI" id="CHEBI:57540"/>
        <dbReference type="ChEBI" id="CHEBI:57945"/>
        <dbReference type="ChEBI" id="CHEBI:58859"/>
        <dbReference type="EC" id="1.4.1.24"/>
    </reaction>
</comment>
<comment type="similarity">
    <text evidence="1">Belongs to the archaeal-type DHQ synthase family.</text>
</comment>
<proteinExistence type="inferred from homology"/>
<evidence type="ECO:0000255" key="1">
    <source>
        <dbReference type="HAMAP-Rule" id="MF_01244"/>
    </source>
</evidence>
<organism>
    <name type="scientific">Methanosphaerula palustris (strain ATCC BAA-1556 / DSM 19958 / E1-9c)</name>
    <dbReference type="NCBI Taxonomy" id="521011"/>
    <lineage>
        <taxon>Archaea</taxon>
        <taxon>Methanobacteriati</taxon>
        <taxon>Methanobacteriota</taxon>
        <taxon>Stenosarchaea group</taxon>
        <taxon>Methanomicrobia</taxon>
        <taxon>Methanomicrobiales</taxon>
        <taxon>Methanoregulaceae</taxon>
        <taxon>Methanosphaerula</taxon>
    </lineage>
</organism>
<protein>
    <recommendedName>
        <fullName evidence="1">3-dehydroquinate synthase</fullName>
        <shortName evidence="1">DHQ synthase</shortName>
        <ecNumber evidence="1">1.4.1.24</ecNumber>
    </recommendedName>
    <alternativeName>
        <fullName evidence="1">3-dehydroquinate synthase II</fullName>
    </alternativeName>
</protein>
<keyword id="KW-0028">Amino-acid biosynthesis</keyword>
<keyword id="KW-0057">Aromatic amino acid biosynthesis</keyword>
<keyword id="KW-0520">NAD</keyword>
<keyword id="KW-0560">Oxidoreductase</keyword>
<keyword id="KW-1185">Reference proteome</keyword>
<dbReference type="EC" id="1.4.1.24" evidence="1"/>
<dbReference type="EMBL" id="CP001338">
    <property type="protein sequence ID" value="ACL17879.1"/>
    <property type="molecule type" value="Genomic_DNA"/>
</dbReference>
<dbReference type="RefSeq" id="WP_012619198.1">
    <property type="nucleotide sequence ID" value="NC_011832.1"/>
</dbReference>
<dbReference type="STRING" id="521011.Mpal_2609"/>
<dbReference type="GeneID" id="7271877"/>
<dbReference type="KEGG" id="mpl:Mpal_2609"/>
<dbReference type="eggNOG" id="arCOG04353">
    <property type="taxonomic scope" value="Archaea"/>
</dbReference>
<dbReference type="HOGENOM" id="CLU_056379_0_0_2"/>
<dbReference type="OrthoDB" id="10265at2157"/>
<dbReference type="Proteomes" id="UP000002457">
    <property type="component" value="Chromosome"/>
</dbReference>
<dbReference type="GO" id="GO:0003856">
    <property type="term" value="F:3-dehydroquinate synthase activity"/>
    <property type="evidence" value="ECO:0007669"/>
    <property type="project" value="InterPro"/>
</dbReference>
<dbReference type="GO" id="GO:0102042">
    <property type="term" value="F:dehydroquinate synthase activity"/>
    <property type="evidence" value="ECO:0007669"/>
    <property type="project" value="UniProtKB-EC"/>
</dbReference>
<dbReference type="GO" id="GO:0051287">
    <property type="term" value="F:NAD binding"/>
    <property type="evidence" value="ECO:0007669"/>
    <property type="project" value="UniProtKB-UniRule"/>
</dbReference>
<dbReference type="GO" id="GO:0008652">
    <property type="term" value="P:amino acid biosynthetic process"/>
    <property type="evidence" value="ECO:0007669"/>
    <property type="project" value="UniProtKB-KW"/>
</dbReference>
<dbReference type="GO" id="GO:0009073">
    <property type="term" value="P:aromatic amino acid family biosynthetic process"/>
    <property type="evidence" value="ECO:0007669"/>
    <property type="project" value="UniProtKB-UniRule"/>
</dbReference>
<dbReference type="HAMAP" id="MF_01244">
    <property type="entry name" value="Arch_DHQ_synthase"/>
    <property type="match status" value="1"/>
</dbReference>
<dbReference type="InterPro" id="IPR002812">
    <property type="entry name" value="DHQ_synth"/>
</dbReference>
<dbReference type="NCBIfam" id="NF002627">
    <property type="entry name" value="PRK02290.1-5"/>
    <property type="match status" value="1"/>
</dbReference>
<dbReference type="PANTHER" id="PTHR33563">
    <property type="match status" value="1"/>
</dbReference>
<dbReference type="PANTHER" id="PTHR33563:SF1">
    <property type="entry name" value="3-DEHYDROQUINATE SYNTHASE"/>
    <property type="match status" value="1"/>
</dbReference>
<dbReference type="Pfam" id="PF01959">
    <property type="entry name" value="DHQS"/>
    <property type="match status" value="1"/>
</dbReference>
<dbReference type="PIRSF" id="PIRSF006655">
    <property type="entry name" value="DHQ_synth"/>
    <property type="match status" value="1"/>
</dbReference>
<reference key="1">
    <citation type="journal article" date="2015" name="Genome Announc.">
        <title>Complete Genome Sequence of Methanosphaerula palustris E1-9CT, a Hydrogenotrophic Methanogen Isolated from a Minerotrophic Fen Peatland.</title>
        <authorList>
            <person name="Cadillo-Quiroz H."/>
            <person name="Browne P."/>
            <person name="Kyrpides N."/>
            <person name="Woyke T."/>
            <person name="Goodwin L."/>
            <person name="Detter C."/>
            <person name="Yavitt J.B."/>
            <person name="Zinder S.H."/>
        </authorList>
    </citation>
    <scope>NUCLEOTIDE SEQUENCE [LARGE SCALE GENOMIC DNA]</scope>
    <source>
        <strain>ATCC BAA-1556 / DSM 19958 / E1-9c</strain>
    </source>
</reference>
<sequence>MKQCWVDLSCWNKDLATVALEAGVDAIVVDDAAKVNVLAKVTTIAPNGDLIPGKDVSMVTIVDKASEEACLEKAKLGPVIVSTGDWTVIPLENLVAQSDRIFAAVGSVEEARLALTILEQGVAGVVLMTTDPEVIRTVAAMVRGAGAKVPLVPFTLTVVRQLGMGDRVCIDTCSILADGEGMLVGNTSSAFFLVHAETIENLYVAPRPFRVNAGAVHAYVLTPGNRTAYLADLRAGDLVTVTAADGGTEEVIIGRLKIEKRPLLLVEGEAGGVKAGLVLQNAETIRLVGLDGKARSVVDLKPGDQVLGMVAEGGRHFGYAVKEQICEQ</sequence>
<name>DHQS_METPE</name>
<accession>B8GF73</accession>
<gene>
    <name evidence="1" type="primary">aroB'</name>
    <name type="ordered locus">Mpal_2609</name>
</gene>
<feature type="chain" id="PRO_1000165041" description="3-dehydroquinate synthase">
    <location>
        <begin position="1"/>
        <end position="328"/>
    </location>
</feature>